<comment type="function">
    <text evidence="1">Extracellular dipeptidyl-peptidase which removes N-terminal dipeptides sequentially from polypeptides having unsubstituted N-termini provided that the penultimate residue is proline.</text>
</comment>
<comment type="catalytic activity">
    <reaction>
        <text>Release of an N-terminal dipeptide, Xaa-Yaa-|-Zaa-, from a polypeptide, preferentially when Yaa is Pro, provided Zaa is neither Pro nor hydroxyproline.</text>
        <dbReference type="EC" id="3.4.14.5"/>
    </reaction>
</comment>
<comment type="subcellular location">
    <subcellularLocation>
        <location evidence="1">Secreted</location>
    </subcellularLocation>
</comment>
<comment type="similarity">
    <text evidence="3">Belongs to the peptidase S9B family.</text>
</comment>
<dbReference type="EC" id="3.4.14.5"/>
<dbReference type="EMBL" id="AACD01000108">
    <property type="protein sequence ID" value="EAA58460.1"/>
    <property type="molecule type" value="Genomic_DNA"/>
</dbReference>
<dbReference type="EMBL" id="BN001301">
    <property type="protein sequence ID" value="CBF69472.1"/>
    <property type="molecule type" value="Genomic_DNA"/>
</dbReference>
<dbReference type="RefSeq" id="XP_664042.1">
    <property type="nucleotide sequence ID" value="XM_658950.1"/>
</dbReference>
<dbReference type="SMR" id="Q5AZ42"/>
<dbReference type="STRING" id="227321.Q5AZ42"/>
<dbReference type="ESTHER" id="emeni-q5az42">
    <property type="family name" value="DPP4N_Peptidase_S9"/>
</dbReference>
<dbReference type="MEROPS" id="S09.008"/>
<dbReference type="GlyCosmos" id="Q5AZ42">
    <property type="glycosylation" value="7 sites, No reported glycans"/>
</dbReference>
<dbReference type="EnsemblFungi" id="CBF69472">
    <property type="protein sequence ID" value="CBF69472"/>
    <property type="gene ID" value="ANIA_06438"/>
</dbReference>
<dbReference type="KEGG" id="ani:ANIA_06438"/>
<dbReference type="VEuPathDB" id="FungiDB:AN6438"/>
<dbReference type="eggNOG" id="KOG2100">
    <property type="taxonomic scope" value="Eukaryota"/>
</dbReference>
<dbReference type="HOGENOM" id="CLU_006105_0_2_1"/>
<dbReference type="InParanoid" id="Q5AZ42"/>
<dbReference type="OMA" id="YTSTEHH"/>
<dbReference type="OrthoDB" id="16520at2759"/>
<dbReference type="Proteomes" id="UP000000560">
    <property type="component" value="Chromosome I"/>
</dbReference>
<dbReference type="GO" id="GO:0005576">
    <property type="term" value="C:extracellular region"/>
    <property type="evidence" value="ECO:0000314"/>
    <property type="project" value="AspGD"/>
</dbReference>
<dbReference type="GO" id="GO:0005886">
    <property type="term" value="C:plasma membrane"/>
    <property type="evidence" value="ECO:0000318"/>
    <property type="project" value="GO_Central"/>
</dbReference>
<dbReference type="GO" id="GO:0004177">
    <property type="term" value="F:aminopeptidase activity"/>
    <property type="evidence" value="ECO:0007669"/>
    <property type="project" value="UniProtKB-KW"/>
</dbReference>
<dbReference type="GO" id="GO:0008239">
    <property type="term" value="F:dipeptidyl-peptidase activity"/>
    <property type="evidence" value="ECO:0000318"/>
    <property type="project" value="GO_Central"/>
</dbReference>
<dbReference type="GO" id="GO:0008236">
    <property type="term" value="F:serine-type peptidase activity"/>
    <property type="evidence" value="ECO:0007669"/>
    <property type="project" value="UniProtKB-KW"/>
</dbReference>
<dbReference type="GO" id="GO:0006508">
    <property type="term" value="P:proteolysis"/>
    <property type="evidence" value="ECO:0000318"/>
    <property type="project" value="GO_Central"/>
</dbReference>
<dbReference type="FunFam" id="3.40.50.1820:FF:000003">
    <property type="entry name" value="Dipeptidyl peptidase 4"/>
    <property type="match status" value="1"/>
</dbReference>
<dbReference type="FunFam" id="2.140.10.30:FF:000003">
    <property type="entry name" value="Probable dipeptidyl peptidase 4"/>
    <property type="match status" value="1"/>
</dbReference>
<dbReference type="Gene3D" id="3.40.50.1820">
    <property type="entry name" value="alpha/beta hydrolase"/>
    <property type="match status" value="1"/>
</dbReference>
<dbReference type="Gene3D" id="2.140.10.30">
    <property type="entry name" value="Dipeptidylpeptidase IV, N-terminal domain"/>
    <property type="match status" value="1"/>
</dbReference>
<dbReference type="InterPro" id="IPR029058">
    <property type="entry name" value="AB_hydrolase_fold"/>
</dbReference>
<dbReference type="InterPro" id="IPR001375">
    <property type="entry name" value="Peptidase_S9_cat"/>
</dbReference>
<dbReference type="InterPro" id="IPR002469">
    <property type="entry name" value="Peptidase_S9B_N"/>
</dbReference>
<dbReference type="InterPro" id="IPR050278">
    <property type="entry name" value="Serine_Prot_S9B/DPPIV"/>
</dbReference>
<dbReference type="PANTHER" id="PTHR11731:SF162">
    <property type="entry name" value="DIPEPTIDYL PEPTIDASE 4-RELATED"/>
    <property type="match status" value="1"/>
</dbReference>
<dbReference type="PANTHER" id="PTHR11731">
    <property type="entry name" value="PROTEASE FAMILY S9B,C DIPEPTIDYL-PEPTIDASE IV-RELATED"/>
    <property type="match status" value="1"/>
</dbReference>
<dbReference type="Pfam" id="PF00930">
    <property type="entry name" value="DPPIV_N"/>
    <property type="match status" value="1"/>
</dbReference>
<dbReference type="Pfam" id="PF00326">
    <property type="entry name" value="Peptidase_S9"/>
    <property type="match status" value="1"/>
</dbReference>
<dbReference type="SUPFAM" id="SSF53474">
    <property type="entry name" value="alpha/beta-Hydrolases"/>
    <property type="match status" value="1"/>
</dbReference>
<dbReference type="SUPFAM" id="SSF82171">
    <property type="entry name" value="DPP6 N-terminal domain-like"/>
    <property type="match status" value="1"/>
</dbReference>
<organism>
    <name type="scientific">Emericella nidulans (strain FGSC A4 / ATCC 38163 / CBS 112.46 / NRRL 194 / M139)</name>
    <name type="common">Aspergillus nidulans</name>
    <dbReference type="NCBI Taxonomy" id="227321"/>
    <lineage>
        <taxon>Eukaryota</taxon>
        <taxon>Fungi</taxon>
        <taxon>Dikarya</taxon>
        <taxon>Ascomycota</taxon>
        <taxon>Pezizomycotina</taxon>
        <taxon>Eurotiomycetes</taxon>
        <taxon>Eurotiomycetidae</taxon>
        <taxon>Eurotiales</taxon>
        <taxon>Aspergillaceae</taxon>
        <taxon>Aspergillus</taxon>
        <taxon>Aspergillus subgen. Nidulantes</taxon>
    </lineage>
</organism>
<protein>
    <recommendedName>
        <fullName>Probable dipeptidyl peptidase 4</fullName>
        <ecNumber>3.4.14.5</ecNumber>
    </recommendedName>
    <alternativeName>
        <fullName>Dipeptidyl peptidase IV</fullName>
        <shortName>DPP IV</shortName>
        <shortName>DppIV</shortName>
    </alternativeName>
</protein>
<name>DPP4_EMENI</name>
<feature type="signal peptide" evidence="2">
    <location>
        <begin position="1"/>
        <end position="18"/>
    </location>
</feature>
<feature type="chain" id="PRO_0000397813" description="Probable dipeptidyl peptidase 4">
    <location>
        <begin position="19"/>
        <end position="773"/>
    </location>
</feature>
<feature type="active site" description="Charge relay system" evidence="1">
    <location>
        <position position="619"/>
    </location>
</feature>
<feature type="active site" description="Charge relay system" evidence="1">
    <location>
        <position position="696"/>
    </location>
</feature>
<feature type="active site" description="Charge relay system" evidence="1">
    <location>
        <position position="731"/>
    </location>
</feature>
<feature type="glycosylation site" description="N-linked (GlcNAc...) asparagine" evidence="2">
    <location>
        <position position="37"/>
    </location>
</feature>
<feature type="glycosylation site" description="N-linked (GlcNAc...) asparagine" evidence="2">
    <location>
        <position position="80"/>
    </location>
</feature>
<feature type="glycosylation site" description="N-linked (GlcNAc...) asparagine" evidence="2">
    <location>
        <position position="112"/>
    </location>
</feature>
<feature type="glycosylation site" description="N-linked (GlcNAc...) asparagine" evidence="2">
    <location>
        <position position="220"/>
    </location>
</feature>
<feature type="glycosylation site" description="N-linked (GlcNAc...) asparagine" evidence="2">
    <location>
        <position position="471"/>
    </location>
</feature>
<feature type="glycosylation site" description="N-linked (GlcNAc...) asparagine" evidence="2">
    <location>
        <position position="496"/>
    </location>
</feature>
<feature type="glycosylation site" description="N-linked (GlcNAc...) asparagine" evidence="2">
    <location>
        <position position="671"/>
    </location>
</feature>
<keyword id="KW-0031">Aminopeptidase</keyword>
<keyword id="KW-0325">Glycoprotein</keyword>
<keyword id="KW-0378">Hydrolase</keyword>
<keyword id="KW-0645">Protease</keyword>
<keyword id="KW-1185">Reference proteome</keyword>
<keyword id="KW-0964">Secreted</keyword>
<keyword id="KW-0720">Serine protease</keyword>
<keyword id="KW-0732">Signal</keyword>
<sequence>MKLSVLSVLLVSVAQAAAAPWRPREPRAAGSKRLTFNETVISAALSPSSISVQWIATENDGDYVYQEEDGSIKIESIVTNRSQTIVPAEKIPADAYSYWISPDLSAVLWATNYTKQYRHSFFADYYIQDVETLETVPLVEDMVGDIQYAEWSPSGDSIAFVRGNNLWTWSDGTVTAITKDGGPDMFHGVPDWIYEEEILGDRFALWFSPDSELLAFLTFNETGVPTFTVQYFMDNQEIAPPYPRELDIRYPKVSETNPTVKLNILQLSDNTVSTIPIDVFDPSELIVGEVAWVTDTHTELAVKAFNRVQDESKVVIVETASGETKIAHERDGTDGWLDNLLSISYVGPLALGSGDASSAYYVDLSDHSGWTHLYLFSTSGGDPIPLTEGEWEVTSIVSIDQERELVYYLSTQHHSTERHLYSVSYRTFEITPLVDDTVEAYWSVSFSAKAGYYILTYAGPSVPYQELYSVNQTAPLRTLTSNAALIEKLEEYALPNISYFELEIPSGEKLNVMQRLPVGFSPDKKYPVLFTPYGGPGAQEVSKRWQSLDFNAYIASDPELEYVTWTVDNRGTGYRGREFRSLVAKQLGKLEAEDQVYAAKQAAKLDWVDSEHIAIWGWSYGGYLTGKVLETDSGAFSLGLLTAPVSDWRLYDSMYTERYMKTLSTNAEGYNTTAIRHTDGFKNVEGGFLIQHGTGDDNVHFQNAAALGDTLIGNGVTPEKMQVQWFTDSDHSIRYNGGNVFLYRQLAQRLYKEKNRAKKEQHQWSKRSQDWVV</sequence>
<proteinExistence type="inferred from homology"/>
<reference key="1">
    <citation type="journal article" date="2005" name="Nature">
        <title>Sequencing of Aspergillus nidulans and comparative analysis with A. fumigatus and A. oryzae.</title>
        <authorList>
            <person name="Galagan J.E."/>
            <person name="Calvo S.E."/>
            <person name="Cuomo C."/>
            <person name="Ma L.-J."/>
            <person name="Wortman J.R."/>
            <person name="Batzoglou S."/>
            <person name="Lee S.-I."/>
            <person name="Bastuerkmen M."/>
            <person name="Spevak C.C."/>
            <person name="Clutterbuck J."/>
            <person name="Kapitonov V."/>
            <person name="Jurka J."/>
            <person name="Scazzocchio C."/>
            <person name="Farman M.L."/>
            <person name="Butler J."/>
            <person name="Purcell S."/>
            <person name="Harris S."/>
            <person name="Braus G.H."/>
            <person name="Draht O."/>
            <person name="Busch S."/>
            <person name="D'Enfert C."/>
            <person name="Bouchier C."/>
            <person name="Goldman G.H."/>
            <person name="Bell-Pedersen D."/>
            <person name="Griffiths-Jones S."/>
            <person name="Doonan J.H."/>
            <person name="Yu J."/>
            <person name="Vienken K."/>
            <person name="Pain A."/>
            <person name="Freitag M."/>
            <person name="Selker E.U."/>
            <person name="Archer D.B."/>
            <person name="Penalva M.A."/>
            <person name="Oakley B.R."/>
            <person name="Momany M."/>
            <person name="Tanaka T."/>
            <person name="Kumagai T."/>
            <person name="Asai K."/>
            <person name="Machida M."/>
            <person name="Nierman W.C."/>
            <person name="Denning D.W."/>
            <person name="Caddick M.X."/>
            <person name="Hynes M."/>
            <person name="Paoletti M."/>
            <person name="Fischer R."/>
            <person name="Miller B.L."/>
            <person name="Dyer P.S."/>
            <person name="Sachs M.S."/>
            <person name="Osmani S.A."/>
            <person name="Birren B.W."/>
        </authorList>
    </citation>
    <scope>NUCLEOTIDE SEQUENCE [LARGE SCALE GENOMIC DNA]</scope>
    <source>
        <strain>FGSC A4 / ATCC 38163 / CBS 112.46 / NRRL 194 / M139</strain>
    </source>
</reference>
<reference key="2">
    <citation type="journal article" date="2009" name="Fungal Genet. Biol.">
        <title>The 2008 update of the Aspergillus nidulans genome annotation: a community effort.</title>
        <authorList>
            <person name="Wortman J.R."/>
            <person name="Gilsenan J.M."/>
            <person name="Joardar V."/>
            <person name="Deegan J."/>
            <person name="Clutterbuck J."/>
            <person name="Andersen M.R."/>
            <person name="Archer D."/>
            <person name="Bencina M."/>
            <person name="Braus G."/>
            <person name="Coutinho P."/>
            <person name="von Dohren H."/>
            <person name="Doonan J."/>
            <person name="Driessen A.J."/>
            <person name="Durek P."/>
            <person name="Espeso E."/>
            <person name="Fekete E."/>
            <person name="Flipphi M."/>
            <person name="Estrada C.G."/>
            <person name="Geysens S."/>
            <person name="Goldman G."/>
            <person name="de Groot P.W."/>
            <person name="Hansen K."/>
            <person name="Harris S.D."/>
            <person name="Heinekamp T."/>
            <person name="Helmstaedt K."/>
            <person name="Henrissat B."/>
            <person name="Hofmann G."/>
            <person name="Homan T."/>
            <person name="Horio T."/>
            <person name="Horiuchi H."/>
            <person name="James S."/>
            <person name="Jones M."/>
            <person name="Karaffa L."/>
            <person name="Karanyi Z."/>
            <person name="Kato M."/>
            <person name="Keller N."/>
            <person name="Kelly D.E."/>
            <person name="Kiel J.A."/>
            <person name="Kim J.M."/>
            <person name="van der Klei I.J."/>
            <person name="Klis F.M."/>
            <person name="Kovalchuk A."/>
            <person name="Krasevec N."/>
            <person name="Kubicek C.P."/>
            <person name="Liu B."/>
            <person name="Maccabe A."/>
            <person name="Meyer V."/>
            <person name="Mirabito P."/>
            <person name="Miskei M."/>
            <person name="Mos M."/>
            <person name="Mullins J."/>
            <person name="Nelson D.R."/>
            <person name="Nielsen J."/>
            <person name="Oakley B.R."/>
            <person name="Osmani S.A."/>
            <person name="Pakula T."/>
            <person name="Paszewski A."/>
            <person name="Paulsen I."/>
            <person name="Pilsyk S."/>
            <person name="Pocsi I."/>
            <person name="Punt P.J."/>
            <person name="Ram A.F."/>
            <person name="Ren Q."/>
            <person name="Robellet X."/>
            <person name="Robson G."/>
            <person name="Seiboth B."/>
            <person name="van Solingen P."/>
            <person name="Specht T."/>
            <person name="Sun J."/>
            <person name="Taheri-Talesh N."/>
            <person name="Takeshita N."/>
            <person name="Ussery D."/>
            <person name="vanKuyk P.A."/>
            <person name="Visser H."/>
            <person name="van de Vondervoort P.J."/>
            <person name="de Vries R.P."/>
            <person name="Walton J."/>
            <person name="Xiang X."/>
            <person name="Xiong Y."/>
            <person name="Zeng A.P."/>
            <person name="Brandt B.W."/>
            <person name="Cornell M.J."/>
            <person name="van den Hondel C.A."/>
            <person name="Visser J."/>
            <person name="Oliver S.G."/>
            <person name="Turner G."/>
        </authorList>
    </citation>
    <scope>GENOME REANNOTATION</scope>
    <source>
        <strain>FGSC A4 / ATCC 38163 / CBS 112.46 / NRRL 194 / M139</strain>
    </source>
</reference>
<accession>Q5AZ42</accession>
<accession>C8V0E7</accession>
<evidence type="ECO:0000250" key="1"/>
<evidence type="ECO:0000255" key="2"/>
<evidence type="ECO:0000305" key="3"/>
<gene>
    <name type="primary">dpp4</name>
    <name type="ORF">AN6438</name>
</gene>